<sequence length="510" mass="56417">MSKKPVALIILDGFALRDEDKGNAVTHAKKPNFDRFWNEYPHATLQASGEAVGLPEGQMGNSEVGHLNIGAGRIVYQSLTRVNVAIREGEFEQNETLLAAVKHAKEKGTNLHLFGLLSDGGVHSHIEHLYALLRLAKSEGLEKVYIHGFLDGRDVAPQSAETYLKELNEKIEEYGVGEIATLSGRYYSMDRDKRWERVEKSYRAMVYGEGPSYTSAEECVKDSYDNGIYDEFVLPSVITKEDGSPVATIQDEDAVIFYNFRPDRAIQISNTFANEDFRSFDRGEKHPKHLHFVCLTHFSETVDGYVAFKPINLDNTLGEVLSQNNLKQLRIAETEKYPHVTFFMSGGREAEFPGETRILIDSPKVATYDLKPEMSAYEVTDALLAEIEGDKQDAILLNFANPDMVGHSGMLEPTVKAIETVDECLGKIVDAILAKGGTAIITADHGNADEVITLEGNPMTAHTTNPVPVIVTKQGLELREDGILGDLAPTMLTLLDVAQPKEMTGKTLIK</sequence>
<evidence type="ECO:0000255" key="1">
    <source>
        <dbReference type="HAMAP-Rule" id="MF_01038"/>
    </source>
</evidence>
<evidence type="ECO:0000305" key="2"/>
<name>GPMI_PRIM1</name>
<feature type="chain" id="PRO_0000212126" description="2,3-bisphosphoglycerate-independent phosphoglycerate mutase">
    <location>
        <begin position="1"/>
        <end position="510"/>
    </location>
</feature>
<feature type="active site" description="Phosphoserine intermediate" evidence="1">
    <location>
        <position position="62"/>
    </location>
</feature>
<feature type="binding site" evidence="1">
    <location>
        <position position="12"/>
    </location>
    <ligand>
        <name>Mn(2+)</name>
        <dbReference type="ChEBI" id="CHEBI:29035"/>
        <label>2</label>
    </ligand>
</feature>
<feature type="binding site" evidence="1">
    <location>
        <position position="62"/>
    </location>
    <ligand>
        <name>Mn(2+)</name>
        <dbReference type="ChEBI" id="CHEBI:29035"/>
        <label>2</label>
    </ligand>
</feature>
<feature type="binding site" evidence="1">
    <location>
        <position position="123"/>
    </location>
    <ligand>
        <name>substrate</name>
    </ligand>
</feature>
<feature type="binding site" evidence="1">
    <location>
        <begin position="153"/>
        <end position="154"/>
    </location>
    <ligand>
        <name>substrate</name>
    </ligand>
</feature>
<feature type="binding site" evidence="1">
    <location>
        <position position="185"/>
    </location>
    <ligand>
        <name>substrate</name>
    </ligand>
</feature>
<feature type="binding site" evidence="1">
    <location>
        <position position="191"/>
    </location>
    <ligand>
        <name>substrate</name>
    </ligand>
</feature>
<feature type="binding site" evidence="1">
    <location>
        <begin position="261"/>
        <end position="264"/>
    </location>
    <ligand>
        <name>substrate</name>
    </ligand>
</feature>
<feature type="binding site" evidence="1">
    <location>
        <position position="336"/>
    </location>
    <ligand>
        <name>substrate</name>
    </ligand>
</feature>
<feature type="binding site" evidence="1">
    <location>
        <position position="403"/>
    </location>
    <ligand>
        <name>Mn(2+)</name>
        <dbReference type="ChEBI" id="CHEBI:29035"/>
        <label>1</label>
    </ligand>
</feature>
<feature type="binding site" evidence="1">
    <location>
        <position position="407"/>
    </location>
    <ligand>
        <name>Mn(2+)</name>
        <dbReference type="ChEBI" id="CHEBI:29035"/>
        <label>1</label>
    </ligand>
</feature>
<feature type="binding site" evidence="1">
    <location>
        <position position="444"/>
    </location>
    <ligand>
        <name>Mn(2+)</name>
        <dbReference type="ChEBI" id="CHEBI:29035"/>
        <label>2</label>
    </ligand>
</feature>
<feature type="binding site" evidence="1">
    <location>
        <position position="445"/>
    </location>
    <ligand>
        <name>Mn(2+)</name>
        <dbReference type="ChEBI" id="CHEBI:29035"/>
        <label>2</label>
    </ligand>
</feature>
<feature type="binding site" evidence="1">
    <location>
        <position position="462"/>
    </location>
    <ligand>
        <name>Mn(2+)</name>
        <dbReference type="ChEBI" id="CHEBI:29035"/>
        <label>1</label>
    </ligand>
</feature>
<feature type="sequence conflict" description="In Ref. 1; AAD26327." evidence="2" ref="1">
    <original>L</original>
    <variation>LF</variation>
    <location>
        <position position="494"/>
    </location>
</feature>
<proteinExistence type="inferred from homology"/>
<reference key="1">
    <citation type="journal article" date="1999" name="J. Struct. Biol.">
        <title>Structural studies on a 2,3-diphosphoglycerate independent phosphoglycerate mutase from Bacillus stearothermophilus.</title>
        <authorList>
            <person name="Chander M."/>
            <person name="Setlow P."/>
            <person name="Lamani E."/>
            <person name="Jedrzejas M.J."/>
        </authorList>
    </citation>
    <scope>NUCLEOTIDE SEQUENCE [GENOMIC DNA]</scope>
</reference>
<reference key="2">
    <citation type="journal article" date="2011" name="J. Bacteriol.">
        <title>Genome sequences of the biotechnologically important Bacillus megaterium strains QM B1551 and DSM319.</title>
        <authorList>
            <person name="Eppinger M."/>
            <person name="Bunk B."/>
            <person name="Johns M.A."/>
            <person name="Edirisinghe J.N."/>
            <person name="Kutumbaka K.K."/>
            <person name="Koenig S.S."/>
            <person name="Creasy H.H."/>
            <person name="Rosovitz M.J."/>
            <person name="Riley D.R."/>
            <person name="Daugherty S."/>
            <person name="Martin M."/>
            <person name="Elbourne L.D."/>
            <person name="Paulsen I."/>
            <person name="Biedendieck R."/>
            <person name="Braun C."/>
            <person name="Grayburn S."/>
            <person name="Dhingra S."/>
            <person name="Lukyanchuk V."/>
            <person name="Ball B."/>
            <person name="Ul-Qamar R."/>
            <person name="Seibel J."/>
            <person name="Bremer E."/>
            <person name="Jahn D."/>
            <person name="Ravel J."/>
            <person name="Vary P.S."/>
        </authorList>
    </citation>
    <scope>NUCLEOTIDE SEQUENCE [LARGE SCALE GENOMIC DNA]</scope>
    <source>
        <strain>ATCC 12872 / DSM 1804 / QMB1551</strain>
    </source>
</reference>
<keyword id="KW-0324">Glycolysis</keyword>
<keyword id="KW-0413">Isomerase</keyword>
<keyword id="KW-0464">Manganese</keyword>
<keyword id="KW-0479">Metal-binding</keyword>
<keyword id="KW-0597">Phosphoprotein</keyword>
<keyword id="KW-1185">Reference proteome</keyword>
<keyword id="KW-0749">Sporulation</keyword>
<comment type="function">
    <text evidence="1">Essential for rapid growth and for sporulation. Catalyzes the interconversion of 2-phosphoglycerate and 3-phosphoglycerate.</text>
</comment>
<comment type="catalytic activity">
    <reaction evidence="1">
        <text>(2R)-2-phosphoglycerate = (2R)-3-phosphoglycerate</text>
        <dbReference type="Rhea" id="RHEA:15901"/>
        <dbReference type="ChEBI" id="CHEBI:58272"/>
        <dbReference type="ChEBI" id="CHEBI:58289"/>
        <dbReference type="EC" id="5.4.2.12"/>
    </reaction>
</comment>
<comment type="cofactor">
    <cofactor evidence="1">
        <name>Mn(2+)</name>
        <dbReference type="ChEBI" id="CHEBI:29035"/>
    </cofactor>
    <text evidence="1">Binds 2 manganese ions per subunit.</text>
</comment>
<comment type="pathway">
    <text evidence="1">Carbohydrate degradation; glycolysis; pyruvate from D-glyceraldehyde 3-phosphate: step 3/5.</text>
</comment>
<comment type="subunit">
    <text evidence="1">Monomer.</text>
</comment>
<comment type="similarity">
    <text evidence="1">Belongs to the BPG-independent phosphoglycerate mutase family.</text>
</comment>
<gene>
    <name evidence="1" type="primary">gpmI</name>
    <name type="synonym">pgm</name>
    <name type="ordered locus">BMQ_5047</name>
</gene>
<dbReference type="EC" id="5.4.2.12" evidence="1"/>
<dbReference type="EMBL" id="AF120090">
    <property type="protein sequence ID" value="AAD26327.1"/>
    <property type="molecule type" value="Genomic_DNA"/>
</dbReference>
<dbReference type="EMBL" id="CP001983">
    <property type="protein sequence ID" value="ADE72026.1"/>
    <property type="molecule type" value="Genomic_DNA"/>
</dbReference>
<dbReference type="RefSeq" id="WP_013059699.1">
    <property type="nucleotide sequence ID" value="NC_014019.1"/>
</dbReference>
<dbReference type="SMR" id="D5DVF4"/>
<dbReference type="STRING" id="545693.BMQ_5047"/>
<dbReference type="KEGG" id="bmq:BMQ_5047"/>
<dbReference type="eggNOG" id="COG0696">
    <property type="taxonomic scope" value="Bacteria"/>
</dbReference>
<dbReference type="HOGENOM" id="CLU_026099_2_0_9"/>
<dbReference type="UniPathway" id="UPA00109">
    <property type="reaction ID" value="UER00186"/>
</dbReference>
<dbReference type="Proteomes" id="UP000000935">
    <property type="component" value="Chromosome"/>
</dbReference>
<dbReference type="GO" id="GO:0005829">
    <property type="term" value="C:cytosol"/>
    <property type="evidence" value="ECO:0007669"/>
    <property type="project" value="TreeGrafter"/>
</dbReference>
<dbReference type="GO" id="GO:0030145">
    <property type="term" value="F:manganese ion binding"/>
    <property type="evidence" value="ECO:0007669"/>
    <property type="project" value="UniProtKB-UniRule"/>
</dbReference>
<dbReference type="GO" id="GO:0004619">
    <property type="term" value="F:phosphoglycerate mutase activity"/>
    <property type="evidence" value="ECO:0007669"/>
    <property type="project" value="UniProtKB-EC"/>
</dbReference>
<dbReference type="GO" id="GO:0006007">
    <property type="term" value="P:glucose catabolic process"/>
    <property type="evidence" value="ECO:0007669"/>
    <property type="project" value="InterPro"/>
</dbReference>
<dbReference type="GO" id="GO:0006096">
    <property type="term" value="P:glycolytic process"/>
    <property type="evidence" value="ECO:0007669"/>
    <property type="project" value="UniProtKB-UniRule"/>
</dbReference>
<dbReference type="GO" id="GO:0030435">
    <property type="term" value="P:sporulation resulting in formation of a cellular spore"/>
    <property type="evidence" value="ECO:0007669"/>
    <property type="project" value="UniProtKB-KW"/>
</dbReference>
<dbReference type="CDD" id="cd16010">
    <property type="entry name" value="iPGM"/>
    <property type="match status" value="1"/>
</dbReference>
<dbReference type="FunFam" id="3.40.1450.10:FF:000001">
    <property type="entry name" value="2,3-bisphosphoglycerate-independent phosphoglycerate mutase"/>
    <property type="match status" value="1"/>
</dbReference>
<dbReference type="FunFam" id="3.40.720.10:FF:000001">
    <property type="entry name" value="2,3-bisphosphoglycerate-independent phosphoglycerate mutase"/>
    <property type="match status" value="1"/>
</dbReference>
<dbReference type="Gene3D" id="3.40.720.10">
    <property type="entry name" value="Alkaline Phosphatase, subunit A"/>
    <property type="match status" value="1"/>
</dbReference>
<dbReference type="Gene3D" id="3.40.1450.10">
    <property type="entry name" value="BPG-independent phosphoglycerate mutase, domain B"/>
    <property type="match status" value="1"/>
</dbReference>
<dbReference type="HAMAP" id="MF_01038">
    <property type="entry name" value="GpmI"/>
    <property type="match status" value="1"/>
</dbReference>
<dbReference type="InterPro" id="IPR017850">
    <property type="entry name" value="Alkaline_phosphatase_core_sf"/>
</dbReference>
<dbReference type="InterPro" id="IPR011258">
    <property type="entry name" value="BPG-indep_PGM_N"/>
</dbReference>
<dbReference type="InterPro" id="IPR006124">
    <property type="entry name" value="Metalloenzyme"/>
</dbReference>
<dbReference type="InterPro" id="IPR036646">
    <property type="entry name" value="PGAM_B_sf"/>
</dbReference>
<dbReference type="InterPro" id="IPR005995">
    <property type="entry name" value="Pgm_bpd_ind"/>
</dbReference>
<dbReference type="NCBIfam" id="TIGR01307">
    <property type="entry name" value="pgm_bpd_ind"/>
    <property type="match status" value="1"/>
</dbReference>
<dbReference type="PANTHER" id="PTHR31637">
    <property type="entry name" value="2,3-BISPHOSPHOGLYCERATE-INDEPENDENT PHOSPHOGLYCERATE MUTASE"/>
    <property type="match status" value="1"/>
</dbReference>
<dbReference type="PANTHER" id="PTHR31637:SF0">
    <property type="entry name" value="2,3-BISPHOSPHOGLYCERATE-INDEPENDENT PHOSPHOGLYCERATE MUTASE"/>
    <property type="match status" value="1"/>
</dbReference>
<dbReference type="Pfam" id="PF06415">
    <property type="entry name" value="iPGM_N"/>
    <property type="match status" value="1"/>
</dbReference>
<dbReference type="Pfam" id="PF01676">
    <property type="entry name" value="Metalloenzyme"/>
    <property type="match status" value="1"/>
</dbReference>
<dbReference type="PIRSF" id="PIRSF001492">
    <property type="entry name" value="IPGAM"/>
    <property type="match status" value="1"/>
</dbReference>
<dbReference type="SUPFAM" id="SSF64158">
    <property type="entry name" value="2,3-Bisphosphoglycerate-independent phosphoglycerate mutase, substrate-binding domain"/>
    <property type="match status" value="1"/>
</dbReference>
<dbReference type="SUPFAM" id="SSF53649">
    <property type="entry name" value="Alkaline phosphatase-like"/>
    <property type="match status" value="1"/>
</dbReference>
<accession>D5DVF4</accession>
<accession>P35167</accession>
<accession>Q9S6F5</accession>
<protein>
    <recommendedName>
        <fullName evidence="1">2,3-bisphosphoglycerate-independent phosphoglycerate mutase</fullName>
        <shortName evidence="1">BPG-independent PGAM</shortName>
        <shortName evidence="1">Phosphoglyceromutase</shortName>
        <shortName evidence="1">iPGM</shortName>
        <ecNumber evidence="1">5.4.2.12</ecNumber>
    </recommendedName>
</protein>
<organism>
    <name type="scientific">Priestia megaterium (strain ATCC 12872 / QMB1551)</name>
    <name type="common">Bacillus megaterium</name>
    <dbReference type="NCBI Taxonomy" id="545693"/>
    <lineage>
        <taxon>Bacteria</taxon>
        <taxon>Bacillati</taxon>
        <taxon>Bacillota</taxon>
        <taxon>Bacilli</taxon>
        <taxon>Bacillales</taxon>
        <taxon>Bacillaceae</taxon>
        <taxon>Priestia</taxon>
    </lineage>
</organism>